<proteinExistence type="evidence at transcript level"/>
<gene>
    <name type="primary">APRL5</name>
    <name type="ordered locus">At3g03860</name>
    <name type="ORF">F20H23.9</name>
</gene>
<organism>
    <name type="scientific">Arabidopsis thaliana</name>
    <name type="common">Mouse-ear cress</name>
    <dbReference type="NCBI Taxonomy" id="3702"/>
    <lineage>
        <taxon>Eukaryota</taxon>
        <taxon>Viridiplantae</taxon>
        <taxon>Streptophyta</taxon>
        <taxon>Embryophyta</taxon>
        <taxon>Tracheophyta</taxon>
        <taxon>Spermatophyta</taxon>
        <taxon>Magnoliopsida</taxon>
        <taxon>eudicotyledons</taxon>
        <taxon>Gunneridae</taxon>
        <taxon>Pentapetalae</taxon>
        <taxon>rosids</taxon>
        <taxon>malvids</taxon>
        <taxon>Brassicales</taxon>
        <taxon>Brassicaceae</taxon>
        <taxon>Camelineae</taxon>
        <taxon>Arabidopsis</taxon>
    </lineage>
</organism>
<evidence type="ECO:0000255" key="1"/>
<evidence type="ECO:0000305" key="2"/>
<comment type="subcellular location">
    <subcellularLocation>
        <location evidence="2">Membrane</location>
        <topology evidence="2">Single-pass membrane protein</topology>
    </subcellularLocation>
</comment>
<comment type="sequence caution" evidence="2">
    <conflict type="erroneous gene model prediction">
        <sequence resource="EMBL-CDS" id="AAF00632"/>
    </conflict>
</comment>
<dbReference type="EMBL" id="AC009540">
    <property type="protein sequence ID" value="AAF00632.1"/>
    <property type="status" value="ALT_SEQ"/>
    <property type="molecule type" value="Genomic_DNA"/>
</dbReference>
<dbReference type="EMBL" id="CP002686">
    <property type="protein sequence ID" value="AEE74004.1"/>
    <property type="molecule type" value="Genomic_DNA"/>
</dbReference>
<dbReference type="EMBL" id="AY059721">
    <property type="protein sequence ID" value="AAL24078.1"/>
    <property type="molecule type" value="mRNA"/>
</dbReference>
<dbReference type="EMBL" id="AY091351">
    <property type="protein sequence ID" value="AAM14290.1"/>
    <property type="molecule type" value="mRNA"/>
</dbReference>
<dbReference type="RefSeq" id="NP_566214.1">
    <property type="nucleotide sequence ID" value="NM_111257.4"/>
</dbReference>
<dbReference type="SMR" id="Q93YX4"/>
<dbReference type="FunCoup" id="Q93YX4">
    <property type="interactions" value="1350"/>
</dbReference>
<dbReference type="STRING" id="3702.Q93YX4"/>
<dbReference type="GlyCosmos" id="Q93YX4">
    <property type="glycosylation" value="1 site, No reported glycans"/>
</dbReference>
<dbReference type="GlyGen" id="Q93YX4">
    <property type="glycosylation" value="2 sites"/>
</dbReference>
<dbReference type="PaxDb" id="3702-AT3G03860.1"/>
<dbReference type="ProteomicsDB" id="244409"/>
<dbReference type="EnsemblPlants" id="AT3G03860.1">
    <property type="protein sequence ID" value="AT3G03860.1"/>
    <property type="gene ID" value="AT3G03860"/>
</dbReference>
<dbReference type="GeneID" id="821101"/>
<dbReference type="Gramene" id="AT3G03860.1">
    <property type="protein sequence ID" value="AT3G03860.1"/>
    <property type="gene ID" value="AT3G03860"/>
</dbReference>
<dbReference type="KEGG" id="ath:AT3G03860"/>
<dbReference type="Araport" id="AT3G03860"/>
<dbReference type="TAIR" id="AT3G03860">
    <property type="gene designation" value="APRL5"/>
</dbReference>
<dbReference type="eggNOG" id="KOG2640">
    <property type="taxonomic scope" value="Eukaryota"/>
</dbReference>
<dbReference type="HOGENOM" id="CLU_051582_1_0_1"/>
<dbReference type="InParanoid" id="Q93YX4"/>
<dbReference type="OMA" id="VCNYEFE"/>
<dbReference type="PhylomeDB" id="Q93YX4"/>
<dbReference type="PRO" id="PR:Q93YX4"/>
<dbReference type="Proteomes" id="UP000006548">
    <property type="component" value="Chromosome 3"/>
</dbReference>
<dbReference type="ExpressionAtlas" id="Q93YX4">
    <property type="expression patterns" value="baseline and differential"/>
</dbReference>
<dbReference type="GO" id="GO:0016020">
    <property type="term" value="C:membrane"/>
    <property type="evidence" value="ECO:0007669"/>
    <property type="project" value="UniProtKB-SubCell"/>
</dbReference>
<dbReference type="CDD" id="cd02999">
    <property type="entry name" value="PDI_a_ERp44_like"/>
    <property type="match status" value="1"/>
</dbReference>
<dbReference type="Gene3D" id="3.40.30.10">
    <property type="entry name" value="Glutaredoxin"/>
    <property type="match status" value="1"/>
</dbReference>
<dbReference type="InterPro" id="IPR044794">
    <property type="entry name" value="APRL5/7"/>
</dbReference>
<dbReference type="InterPro" id="IPR036249">
    <property type="entry name" value="Thioredoxin-like_sf"/>
</dbReference>
<dbReference type="InterPro" id="IPR013766">
    <property type="entry name" value="Thioredoxin_domain"/>
</dbReference>
<dbReference type="PANTHER" id="PTHR47126:SF3">
    <property type="entry name" value="5'-ADENYLYLSULFATE REDUCTASE-LIKE 5"/>
    <property type="match status" value="1"/>
</dbReference>
<dbReference type="PANTHER" id="PTHR47126">
    <property type="entry name" value="5'-ADENYLYLSULFATE REDUCTASE-LIKE 7"/>
    <property type="match status" value="1"/>
</dbReference>
<dbReference type="Pfam" id="PF00085">
    <property type="entry name" value="Thioredoxin"/>
    <property type="match status" value="1"/>
</dbReference>
<dbReference type="SUPFAM" id="SSF52833">
    <property type="entry name" value="Thioredoxin-like"/>
    <property type="match status" value="1"/>
</dbReference>
<sequence>MDSRVSILFVCAIAVSCFTSGSASSPVDFSVCNYEFELFRFDLEAKCPPSLYPTPPIEVDGDSLDRLMASQHGNAYMSVLFYASWCPFSRAVRPKFDMLSSMFPQIQHLAVEHSQALPSVFSRYGIHSLPSILMVNQTLNARYHGRKDLISLIEFYEEATGLQPVQYVAEGEPTGLNAGDGNLITWLRKGTSIREIFKQDPFLVLSLLFICLQMAILVFPIAESRMRALWASYVANLNLGRFGEISQLFNRGIHMVDVRRLWLKLSLVKTRNFHERAKNAQAWASSLASVSLGQTSSDQS</sequence>
<reference key="1">
    <citation type="journal article" date="2000" name="Nature">
        <title>Sequence and analysis of chromosome 3 of the plant Arabidopsis thaliana.</title>
        <authorList>
            <person name="Salanoubat M."/>
            <person name="Lemcke K."/>
            <person name="Rieger M."/>
            <person name="Ansorge W."/>
            <person name="Unseld M."/>
            <person name="Fartmann B."/>
            <person name="Valle G."/>
            <person name="Bloecker H."/>
            <person name="Perez-Alonso M."/>
            <person name="Obermaier B."/>
            <person name="Delseny M."/>
            <person name="Boutry M."/>
            <person name="Grivell L.A."/>
            <person name="Mache R."/>
            <person name="Puigdomenech P."/>
            <person name="De Simone V."/>
            <person name="Choisne N."/>
            <person name="Artiguenave F."/>
            <person name="Robert C."/>
            <person name="Brottier P."/>
            <person name="Wincker P."/>
            <person name="Cattolico L."/>
            <person name="Weissenbach J."/>
            <person name="Saurin W."/>
            <person name="Quetier F."/>
            <person name="Schaefer M."/>
            <person name="Mueller-Auer S."/>
            <person name="Gabel C."/>
            <person name="Fuchs M."/>
            <person name="Benes V."/>
            <person name="Wurmbach E."/>
            <person name="Drzonek H."/>
            <person name="Erfle H."/>
            <person name="Jordan N."/>
            <person name="Bangert S."/>
            <person name="Wiedelmann R."/>
            <person name="Kranz H."/>
            <person name="Voss H."/>
            <person name="Holland R."/>
            <person name="Brandt P."/>
            <person name="Nyakatura G."/>
            <person name="Vezzi A."/>
            <person name="D'Angelo M."/>
            <person name="Pallavicini A."/>
            <person name="Toppo S."/>
            <person name="Simionati B."/>
            <person name="Conrad A."/>
            <person name="Hornischer K."/>
            <person name="Kauer G."/>
            <person name="Loehnert T.-H."/>
            <person name="Nordsiek G."/>
            <person name="Reichelt J."/>
            <person name="Scharfe M."/>
            <person name="Schoen O."/>
            <person name="Bargues M."/>
            <person name="Terol J."/>
            <person name="Climent J."/>
            <person name="Navarro P."/>
            <person name="Collado C."/>
            <person name="Perez-Perez A."/>
            <person name="Ottenwaelder B."/>
            <person name="Duchemin D."/>
            <person name="Cooke R."/>
            <person name="Laudie M."/>
            <person name="Berger-Llauro C."/>
            <person name="Purnelle B."/>
            <person name="Masuy D."/>
            <person name="de Haan M."/>
            <person name="Maarse A.C."/>
            <person name="Alcaraz J.-P."/>
            <person name="Cottet A."/>
            <person name="Casacuberta E."/>
            <person name="Monfort A."/>
            <person name="Argiriou A."/>
            <person name="Flores M."/>
            <person name="Liguori R."/>
            <person name="Vitale D."/>
            <person name="Mannhaupt G."/>
            <person name="Haase D."/>
            <person name="Schoof H."/>
            <person name="Rudd S."/>
            <person name="Zaccaria P."/>
            <person name="Mewes H.-W."/>
            <person name="Mayer K.F.X."/>
            <person name="Kaul S."/>
            <person name="Town C.D."/>
            <person name="Koo H.L."/>
            <person name="Tallon L.J."/>
            <person name="Jenkins J."/>
            <person name="Rooney T."/>
            <person name="Rizzo M."/>
            <person name="Walts A."/>
            <person name="Utterback T."/>
            <person name="Fujii C.Y."/>
            <person name="Shea T.P."/>
            <person name="Creasy T.H."/>
            <person name="Haas B."/>
            <person name="Maiti R."/>
            <person name="Wu D."/>
            <person name="Peterson J."/>
            <person name="Van Aken S."/>
            <person name="Pai G."/>
            <person name="Militscher J."/>
            <person name="Sellers P."/>
            <person name="Gill J.E."/>
            <person name="Feldblyum T.V."/>
            <person name="Preuss D."/>
            <person name="Lin X."/>
            <person name="Nierman W.C."/>
            <person name="Salzberg S.L."/>
            <person name="White O."/>
            <person name="Venter J.C."/>
            <person name="Fraser C.M."/>
            <person name="Kaneko T."/>
            <person name="Nakamura Y."/>
            <person name="Sato S."/>
            <person name="Kato T."/>
            <person name="Asamizu E."/>
            <person name="Sasamoto S."/>
            <person name="Kimura T."/>
            <person name="Idesawa K."/>
            <person name="Kawashima K."/>
            <person name="Kishida Y."/>
            <person name="Kiyokawa C."/>
            <person name="Kohara M."/>
            <person name="Matsumoto M."/>
            <person name="Matsuno A."/>
            <person name="Muraki A."/>
            <person name="Nakayama S."/>
            <person name="Nakazaki N."/>
            <person name="Shinpo S."/>
            <person name="Takeuchi C."/>
            <person name="Wada T."/>
            <person name="Watanabe A."/>
            <person name="Yamada M."/>
            <person name="Yasuda M."/>
            <person name="Tabata S."/>
        </authorList>
    </citation>
    <scope>NUCLEOTIDE SEQUENCE [LARGE SCALE GENOMIC DNA]</scope>
    <source>
        <strain>cv. Columbia</strain>
    </source>
</reference>
<reference key="2">
    <citation type="journal article" date="2017" name="Plant J.">
        <title>Araport11: a complete reannotation of the Arabidopsis thaliana reference genome.</title>
        <authorList>
            <person name="Cheng C.Y."/>
            <person name="Krishnakumar V."/>
            <person name="Chan A.P."/>
            <person name="Thibaud-Nissen F."/>
            <person name="Schobel S."/>
            <person name="Town C.D."/>
        </authorList>
    </citation>
    <scope>GENOME REANNOTATION</scope>
    <source>
        <strain>cv. Columbia</strain>
    </source>
</reference>
<reference key="3">
    <citation type="journal article" date="2003" name="Science">
        <title>Empirical analysis of transcriptional activity in the Arabidopsis genome.</title>
        <authorList>
            <person name="Yamada K."/>
            <person name="Lim J."/>
            <person name="Dale J.M."/>
            <person name="Chen H."/>
            <person name="Shinn P."/>
            <person name="Palm C.J."/>
            <person name="Southwick A.M."/>
            <person name="Wu H.C."/>
            <person name="Kim C.J."/>
            <person name="Nguyen M."/>
            <person name="Pham P.K."/>
            <person name="Cheuk R.F."/>
            <person name="Karlin-Newmann G."/>
            <person name="Liu S.X."/>
            <person name="Lam B."/>
            <person name="Sakano H."/>
            <person name="Wu T."/>
            <person name="Yu G."/>
            <person name="Miranda M."/>
            <person name="Quach H.L."/>
            <person name="Tripp M."/>
            <person name="Chang C.H."/>
            <person name="Lee J.M."/>
            <person name="Toriumi M.J."/>
            <person name="Chan M.M."/>
            <person name="Tang C.C."/>
            <person name="Onodera C.S."/>
            <person name="Deng J.M."/>
            <person name="Akiyama K."/>
            <person name="Ansari Y."/>
            <person name="Arakawa T."/>
            <person name="Banh J."/>
            <person name="Banno F."/>
            <person name="Bowser L."/>
            <person name="Brooks S.Y."/>
            <person name="Carninci P."/>
            <person name="Chao Q."/>
            <person name="Choy N."/>
            <person name="Enju A."/>
            <person name="Goldsmith A.D."/>
            <person name="Gurjal M."/>
            <person name="Hansen N.F."/>
            <person name="Hayashizaki Y."/>
            <person name="Johnson-Hopson C."/>
            <person name="Hsuan V.W."/>
            <person name="Iida K."/>
            <person name="Karnes M."/>
            <person name="Khan S."/>
            <person name="Koesema E."/>
            <person name="Ishida J."/>
            <person name="Jiang P.X."/>
            <person name="Jones T."/>
            <person name="Kawai J."/>
            <person name="Kamiya A."/>
            <person name="Meyers C."/>
            <person name="Nakajima M."/>
            <person name="Narusaka M."/>
            <person name="Seki M."/>
            <person name="Sakurai T."/>
            <person name="Satou M."/>
            <person name="Tamse R."/>
            <person name="Vaysberg M."/>
            <person name="Wallender E.K."/>
            <person name="Wong C."/>
            <person name="Yamamura Y."/>
            <person name="Yuan S."/>
            <person name="Shinozaki K."/>
            <person name="Davis R.W."/>
            <person name="Theologis A."/>
            <person name="Ecker J.R."/>
        </authorList>
    </citation>
    <scope>NUCLEOTIDE SEQUENCE [LARGE SCALE MRNA]</scope>
    <source>
        <strain>cv. Columbia</strain>
    </source>
</reference>
<name>APRL5_ARATH</name>
<protein>
    <recommendedName>
        <fullName>5'-adenylylsulfate reductase-like 5</fullName>
    </recommendedName>
    <alternativeName>
        <fullName>Adenosine 5'-phosphosulfate reductase-like 5</fullName>
        <shortName>APR-like 5</shortName>
        <shortName>AtAPRL5</shortName>
    </alternativeName>
</protein>
<keyword id="KW-0325">Glycoprotein</keyword>
<keyword id="KW-0472">Membrane</keyword>
<keyword id="KW-1185">Reference proteome</keyword>
<keyword id="KW-0732">Signal</keyword>
<keyword id="KW-0812">Transmembrane</keyword>
<keyword id="KW-1133">Transmembrane helix</keyword>
<accession>Q93YX4</accession>
<accession>Q9SRW3</accession>
<feature type="signal peptide" evidence="1">
    <location>
        <begin position="1"/>
        <end position="23"/>
    </location>
</feature>
<feature type="chain" id="PRO_0000400042" description="5'-adenylylsulfate reductase-like 5">
    <location>
        <begin position="24"/>
        <end position="300"/>
    </location>
</feature>
<feature type="transmembrane region" description="Helical" evidence="1">
    <location>
        <begin position="202"/>
        <end position="222"/>
    </location>
</feature>
<feature type="domain" description="Thioredoxin">
    <location>
        <begin position="41"/>
        <end position="161"/>
    </location>
</feature>
<feature type="glycosylation site" description="N-linked (GlcNAc...) asparagine" evidence="1">
    <location>
        <position position="136"/>
    </location>
</feature>